<sequence length="241" mass="26724">MNILYSILINLALFLLGYLLLGSFNTSIILSRRVKNDDIREHNSKNAGATNSLRTYGAKFALIVFATDVLKTLLPILIISAIVNHVPAVNAFSYASYISPQALGLGVVIGHIFPAYYKFKGGKGAACTVGLIISINIILFLIAFLIFLLVVGISKIVSLGSITVAFSLLLFVWMPWMIQGPTGYWTNAVEYTNSFTTLVNYWYVSPIIYTLCAFLVLVSHRDNFKRLINKSERKFAIKKAV</sequence>
<evidence type="ECO:0000255" key="1">
    <source>
        <dbReference type="HAMAP-Rule" id="MF_01043"/>
    </source>
</evidence>
<gene>
    <name evidence="1" type="primary">plsY</name>
    <name type="ordered locus">MAG3620</name>
</gene>
<proteinExistence type="inferred from homology"/>
<dbReference type="EC" id="2.3.1.275" evidence="1"/>
<dbReference type="EMBL" id="CU179680">
    <property type="protein sequence ID" value="CAL59060.1"/>
    <property type="molecule type" value="Genomic_DNA"/>
</dbReference>
<dbReference type="RefSeq" id="WP_011949535.1">
    <property type="nucleotide sequence ID" value="NC_009497.1"/>
</dbReference>
<dbReference type="SMR" id="A5IYF1"/>
<dbReference type="STRING" id="347257.MAG3620"/>
<dbReference type="GeneID" id="93358121"/>
<dbReference type="KEGG" id="maa:MAG3620"/>
<dbReference type="HOGENOM" id="CLU_081254_3_0_14"/>
<dbReference type="UniPathway" id="UPA00085"/>
<dbReference type="Proteomes" id="UP000007065">
    <property type="component" value="Chromosome"/>
</dbReference>
<dbReference type="GO" id="GO:0005886">
    <property type="term" value="C:plasma membrane"/>
    <property type="evidence" value="ECO:0007669"/>
    <property type="project" value="UniProtKB-SubCell"/>
</dbReference>
<dbReference type="GO" id="GO:0043772">
    <property type="term" value="F:acyl-phosphate glycerol-3-phosphate acyltransferase activity"/>
    <property type="evidence" value="ECO:0007669"/>
    <property type="project" value="UniProtKB-UniRule"/>
</dbReference>
<dbReference type="GO" id="GO:0008654">
    <property type="term" value="P:phospholipid biosynthetic process"/>
    <property type="evidence" value="ECO:0007669"/>
    <property type="project" value="UniProtKB-UniRule"/>
</dbReference>
<dbReference type="HAMAP" id="MF_01043">
    <property type="entry name" value="PlsY"/>
    <property type="match status" value="1"/>
</dbReference>
<dbReference type="InterPro" id="IPR003811">
    <property type="entry name" value="G3P_acylTferase_PlsY"/>
</dbReference>
<dbReference type="NCBIfam" id="TIGR00023">
    <property type="entry name" value="glycerol-3-phosphate 1-O-acyltransferase PlsY"/>
    <property type="match status" value="1"/>
</dbReference>
<dbReference type="PANTHER" id="PTHR30309:SF0">
    <property type="entry name" value="GLYCEROL-3-PHOSPHATE ACYLTRANSFERASE-RELATED"/>
    <property type="match status" value="1"/>
</dbReference>
<dbReference type="PANTHER" id="PTHR30309">
    <property type="entry name" value="INNER MEMBRANE PROTEIN YGIH"/>
    <property type="match status" value="1"/>
</dbReference>
<dbReference type="Pfam" id="PF02660">
    <property type="entry name" value="G3P_acyltransf"/>
    <property type="match status" value="1"/>
</dbReference>
<dbReference type="SMART" id="SM01207">
    <property type="entry name" value="G3P_acyltransf"/>
    <property type="match status" value="1"/>
</dbReference>
<reference key="1">
    <citation type="journal article" date="2007" name="PLoS Genet.">
        <title>Being pathogenic, plastic, and sexual while living with a nearly minimal bacterial genome.</title>
        <authorList>
            <person name="Sirand-Pugnet P."/>
            <person name="Lartigue C."/>
            <person name="Marenda M."/>
            <person name="Jacob D."/>
            <person name="Barre A."/>
            <person name="Barbe V."/>
            <person name="Schenowitz C."/>
            <person name="Mangenot S."/>
            <person name="Couloux A."/>
            <person name="Segurens B."/>
            <person name="de Daruvar A."/>
            <person name="Blanchard A."/>
            <person name="Citti C."/>
        </authorList>
    </citation>
    <scope>NUCLEOTIDE SEQUENCE [LARGE SCALE GENOMIC DNA]</scope>
    <source>
        <strain>NCTC 10123 / CIP 59.7 / PG2</strain>
    </source>
</reference>
<keyword id="KW-1003">Cell membrane</keyword>
<keyword id="KW-0444">Lipid biosynthesis</keyword>
<keyword id="KW-0443">Lipid metabolism</keyword>
<keyword id="KW-0472">Membrane</keyword>
<keyword id="KW-0594">Phospholipid biosynthesis</keyword>
<keyword id="KW-1208">Phospholipid metabolism</keyword>
<keyword id="KW-1185">Reference proteome</keyword>
<keyword id="KW-0808">Transferase</keyword>
<keyword id="KW-0812">Transmembrane</keyword>
<keyword id="KW-1133">Transmembrane helix</keyword>
<accession>A5IYF1</accession>
<name>PLSY_MYCAP</name>
<protein>
    <recommendedName>
        <fullName evidence="1">Glycerol-3-phosphate acyltransferase</fullName>
    </recommendedName>
    <alternativeName>
        <fullName evidence="1">Acyl-PO4 G3P acyltransferase</fullName>
    </alternativeName>
    <alternativeName>
        <fullName evidence="1">Acyl-phosphate--glycerol-3-phosphate acyltransferase</fullName>
    </alternativeName>
    <alternativeName>
        <fullName evidence="1">G3P acyltransferase</fullName>
        <shortName evidence="1">GPAT</shortName>
        <ecNumber evidence="1">2.3.1.275</ecNumber>
    </alternativeName>
    <alternativeName>
        <fullName evidence="1">Lysophosphatidic acid synthase</fullName>
        <shortName evidence="1">LPA synthase</shortName>
    </alternativeName>
</protein>
<comment type="function">
    <text evidence="1">Catalyzes the transfer of an acyl group from acyl-phosphate (acyl-PO(4)) to glycerol-3-phosphate (G3P) to form lysophosphatidic acid (LPA). This enzyme utilizes acyl-phosphate as fatty acyl donor, but not acyl-CoA or acyl-ACP.</text>
</comment>
<comment type="catalytic activity">
    <reaction evidence="1">
        <text>an acyl phosphate + sn-glycerol 3-phosphate = a 1-acyl-sn-glycero-3-phosphate + phosphate</text>
        <dbReference type="Rhea" id="RHEA:34075"/>
        <dbReference type="ChEBI" id="CHEBI:43474"/>
        <dbReference type="ChEBI" id="CHEBI:57597"/>
        <dbReference type="ChEBI" id="CHEBI:57970"/>
        <dbReference type="ChEBI" id="CHEBI:59918"/>
        <dbReference type="EC" id="2.3.1.275"/>
    </reaction>
</comment>
<comment type="pathway">
    <text evidence="1">Lipid metabolism; phospholipid metabolism.</text>
</comment>
<comment type="subunit">
    <text evidence="1">Probably interacts with PlsX.</text>
</comment>
<comment type="subcellular location">
    <subcellularLocation>
        <location evidence="1">Cell membrane</location>
        <topology evidence="1">Multi-pass membrane protein</topology>
    </subcellularLocation>
</comment>
<comment type="similarity">
    <text evidence="1">Belongs to the PlsY family.</text>
</comment>
<feature type="chain" id="PRO_1000136101" description="Glycerol-3-phosphate acyltransferase">
    <location>
        <begin position="1"/>
        <end position="241"/>
    </location>
</feature>
<feature type="transmembrane region" description="Helical" evidence="1">
    <location>
        <begin position="3"/>
        <end position="23"/>
    </location>
</feature>
<feature type="transmembrane region" description="Helical" evidence="1">
    <location>
        <begin position="63"/>
        <end position="83"/>
    </location>
</feature>
<feature type="transmembrane region" description="Helical" evidence="1">
    <location>
        <begin position="97"/>
        <end position="117"/>
    </location>
</feature>
<feature type="transmembrane region" description="Helical" evidence="1">
    <location>
        <begin position="131"/>
        <end position="151"/>
    </location>
</feature>
<feature type="transmembrane region" description="Helical" evidence="1">
    <location>
        <begin position="156"/>
        <end position="176"/>
    </location>
</feature>
<feature type="transmembrane region" description="Helical" evidence="1">
    <location>
        <begin position="198"/>
        <end position="218"/>
    </location>
</feature>
<organism>
    <name type="scientific">Mycoplasmopsis agalactiae (strain NCTC 10123 / CIP 59.7 / PG2)</name>
    <name type="common">Mycoplasma agalactiae</name>
    <dbReference type="NCBI Taxonomy" id="347257"/>
    <lineage>
        <taxon>Bacteria</taxon>
        <taxon>Bacillati</taxon>
        <taxon>Mycoplasmatota</taxon>
        <taxon>Mycoplasmoidales</taxon>
        <taxon>Metamycoplasmataceae</taxon>
        <taxon>Mycoplasmopsis</taxon>
    </lineage>
</organism>